<name>MIAA_WOLSU</name>
<proteinExistence type="inferred from homology"/>
<reference key="1">
    <citation type="journal article" date="2003" name="Proc. Natl. Acad. Sci. U.S.A.">
        <title>Complete genome sequence and analysis of Wolinella succinogenes.</title>
        <authorList>
            <person name="Baar C."/>
            <person name="Eppinger M."/>
            <person name="Raddatz G."/>
            <person name="Simon J."/>
            <person name="Lanz C."/>
            <person name="Klimmek O."/>
            <person name="Nandakumar R."/>
            <person name="Gross R."/>
            <person name="Rosinus A."/>
            <person name="Keller H."/>
            <person name="Jagtap P."/>
            <person name="Linke B."/>
            <person name="Meyer F."/>
            <person name="Lederer H."/>
            <person name="Schuster S.C."/>
        </authorList>
    </citation>
    <scope>NUCLEOTIDE SEQUENCE [LARGE SCALE GENOMIC DNA]</scope>
    <source>
        <strain>ATCC 29543 / DSM 1740 / CCUG 13145 / JCM 31913 / LMG 7466 / NCTC 11488 / FDC 602W</strain>
    </source>
</reference>
<evidence type="ECO:0000255" key="1">
    <source>
        <dbReference type="HAMAP-Rule" id="MF_00185"/>
    </source>
</evidence>
<gene>
    <name evidence="1" type="primary">miaA</name>
    <name type="ordered locus">WS1976</name>
</gene>
<organism>
    <name type="scientific">Wolinella succinogenes (strain ATCC 29543 / DSM 1740 / CCUG 13145 / JCM 31913 / LMG 7466 / NCTC 11488 / FDC 602W)</name>
    <name type="common">Vibrio succinogenes</name>
    <dbReference type="NCBI Taxonomy" id="273121"/>
    <lineage>
        <taxon>Bacteria</taxon>
        <taxon>Pseudomonadati</taxon>
        <taxon>Campylobacterota</taxon>
        <taxon>Epsilonproteobacteria</taxon>
        <taxon>Campylobacterales</taxon>
        <taxon>Helicobacteraceae</taxon>
        <taxon>Wolinella</taxon>
    </lineage>
</organism>
<feature type="chain" id="PRO_0000377371" description="tRNA dimethylallyltransferase">
    <location>
        <begin position="1"/>
        <end position="300"/>
    </location>
</feature>
<feature type="region of interest" description="Interaction with substrate tRNA" evidence="1">
    <location>
        <begin position="33"/>
        <end position="36"/>
    </location>
</feature>
<feature type="binding site" evidence="1">
    <location>
        <begin position="8"/>
        <end position="15"/>
    </location>
    <ligand>
        <name>ATP</name>
        <dbReference type="ChEBI" id="CHEBI:30616"/>
    </ligand>
</feature>
<feature type="binding site" evidence="1">
    <location>
        <begin position="10"/>
        <end position="15"/>
    </location>
    <ligand>
        <name>substrate</name>
    </ligand>
</feature>
<feature type="site" description="Interaction with substrate tRNA" evidence="1">
    <location>
        <position position="100"/>
    </location>
</feature>
<keyword id="KW-0067">ATP-binding</keyword>
<keyword id="KW-0460">Magnesium</keyword>
<keyword id="KW-0547">Nucleotide-binding</keyword>
<keyword id="KW-1185">Reference proteome</keyword>
<keyword id="KW-0808">Transferase</keyword>
<keyword id="KW-0819">tRNA processing</keyword>
<sequence>MKIFAILGASASGKSALGLRLAKELECFILSLDSLSIYQEINIASAKPSKEELLSIRHFGIDLLTPNEPSNAALFAHLFEEALEASNQAGKKALLLVGGTGFFLKRIIEGLSPAPTLDPSAKEWLKEVLENRREAFKELEKIDPLYTSRITPSDLHRLRRGWEIYLGSGLSPSLFFETHPPKPLGHDLKIYELTLERELLRQRITERTEQMLESGLIDEVCQLESRYTREPQAMKSIGIAETLAYLDGEISKEELTPLISTHTAQLAKRQTTFNKTQFTSIRHLEAPRLFEEICHTITKS</sequence>
<accession>Q7M800</accession>
<dbReference type="EC" id="2.5.1.75" evidence="1"/>
<dbReference type="EMBL" id="BX571662">
    <property type="protein sequence ID" value="CAE10979.1"/>
    <property type="molecule type" value="Genomic_DNA"/>
</dbReference>
<dbReference type="RefSeq" id="WP_011139761.1">
    <property type="nucleotide sequence ID" value="NC_005090.1"/>
</dbReference>
<dbReference type="SMR" id="Q7M800"/>
<dbReference type="STRING" id="273121.WS1976"/>
<dbReference type="KEGG" id="wsu:WS1976"/>
<dbReference type="eggNOG" id="COG0324">
    <property type="taxonomic scope" value="Bacteria"/>
</dbReference>
<dbReference type="HOGENOM" id="CLU_032616_0_1_7"/>
<dbReference type="Proteomes" id="UP000000422">
    <property type="component" value="Chromosome"/>
</dbReference>
<dbReference type="GO" id="GO:0005524">
    <property type="term" value="F:ATP binding"/>
    <property type="evidence" value="ECO:0007669"/>
    <property type="project" value="UniProtKB-UniRule"/>
</dbReference>
<dbReference type="GO" id="GO:0052381">
    <property type="term" value="F:tRNA dimethylallyltransferase activity"/>
    <property type="evidence" value="ECO:0007669"/>
    <property type="project" value="UniProtKB-UniRule"/>
</dbReference>
<dbReference type="GO" id="GO:0006400">
    <property type="term" value="P:tRNA modification"/>
    <property type="evidence" value="ECO:0007669"/>
    <property type="project" value="TreeGrafter"/>
</dbReference>
<dbReference type="CDD" id="cd02019">
    <property type="entry name" value="NK"/>
    <property type="match status" value="1"/>
</dbReference>
<dbReference type="Gene3D" id="1.10.20.140">
    <property type="match status" value="1"/>
</dbReference>
<dbReference type="Gene3D" id="3.40.50.300">
    <property type="entry name" value="P-loop containing nucleotide triphosphate hydrolases"/>
    <property type="match status" value="1"/>
</dbReference>
<dbReference type="HAMAP" id="MF_00185">
    <property type="entry name" value="IPP_trans"/>
    <property type="match status" value="1"/>
</dbReference>
<dbReference type="InterPro" id="IPR039657">
    <property type="entry name" value="Dimethylallyltransferase"/>
</dbReference>
<dbReference type="InterPro" id="IPR018022">
    <property type="entry name" value="IPT"/>
</dbReference>
<dbReference type="InterPro" id="IPR027417">
    <property type="entry name" value="P-loop_NTPase"/>
</dbReference>
<dbReference type="NCBIfam" id="TIGR00174">
    <property type="entry name" value="miaA"/>
    <property type="match status" value="1"/>
</dbReference>
<dbReference type="PANTHER" id="PTHR11088">
    <property type="entry name" value="TRNA DIMETHYLALLYLTRANSFERASE"/>
    <property type="match status" value="1"/>
</dbReference>
<dbReference type="PANTHER" id="PTHR11088:SF60">
    <property type="entry name" value="TRNA DIMETHYLALLYLTRANSFERASE"/>
    <property type="match status" value="1"/>
</dbReference>
<dbReference type="Pfam" id="PF01715">
    <property type="entry name" value="IPPT"/>
    <property type="match status" value="1"/>
</dbReference>
<dbReference type="SUPFAM" id="SSF52540">
    <property type="entry name" value="P-loop containing nucleoside triphosphate hydrolases"/>
    <property type="match status" value="2"/>
</dbReference>
<protein>
    <recommendedName>
        <fullName evidence="1">tRNA dimethylallyltransferase</fullName>
        <ecNumber evidence="1">2.5.1.75</ecNumber>
    </recommendedName>
    <alternativeName>
        <fullName evidence="1">Dimethylallyl diphosphate:tRNA dimethylallyltransferase</fullName>
        <shortName evidence="1">DMAPP:tRNA dimethylallyltransferase</shortName>
        <shortName evidence="1">DMATase</shortName>
    </alternativeName>
    <alternativeName>
        <fullName evidence="1">Isopentenyl-diphosphate:tRNA isopentenyltransferase</fullName>
        <shortName evidence="1">IPP transferase</shortName>
        <shortName evidence="1">IPPT</shortName>
        <shortName evidence="1">IPTase</shortName>
    </alternativeName>
</protein>
<comment type="function">
    <text evidence="1">Catalyzes the transfer of a dimethylallyl group onto the adenine at position 37 in tRNAs that read codons beginning with uridine, leading to the formation of N6-(dimethylallyl)adenosine (i(6)A).</text>
</comment>
<comment type="catalytic activity">
    <reaction evidence="1">
        <text>adenosine(37) in tRNA + dimethylallyl diphosphate = N(6)-dimethylallyladenosine(37) in tRNA + diphosphate</text>
        <dbReference type="Rhea" id="RHEA:26482"/>
        <dbReference type="Rhea" id="RHEA-COMP:10162"/>
        <dbReference type="Rhea" id="RHEA-COMP:10375"/>
        <dbReference type="ChEBI" id="CHEBI:33019"/>
        <dbReference type="ChEBI" id="CHEBI:57623"/>
        <dbReference type="ChEBI" id="CHEBI:74411"/>
        <dbReference type="ChEBI" id="CHEBI:74415"/>
        <dbReference type="EC" id="2.5.1.75"/>
    </reaction>
</comment>
<comment type="cofactor">
    <cofactor evidence="1">
        <name>Mg(2+)</name>
        <dbReference type="ChEBI" id="CHEBI:18420"/>
    </cofactor>
</comment>
<comment type="subunit">
    <text evidence="1">Monomer.</text>
</comment>
<comment type="similarity">
    <text evidence="1">Belongs to the IPP transferase family.</text>
</comment>